<keyword id="KW-0067">ATP-binding</keyword>
<keyword id="KW-0072">Autophagy</keyword>
<keyword id="KW-0963">Cytoplasm</keyword>
<keyword id="KW-0967">Endosome</keyword>
<keyword id="KW-0333">Golgi apparatus</keyword>
<keyword id="KW-0418">Kinase</keyword>
<keyword id="KW-0449">Lipoprotein</keyword>
<keyword id="KW-0472">Membrane</keyword>
<keyword id="KW-0519">Myristate</keyword>
<keyword id="KW-0547">Nucleotide-binding</keyword>
<keyword id="KW-0597">Phosphoprotein</keyword>
<keyword id="KW-0653">Protein transport</keyword>
<keyword id="KW-1185">Reference proteome</keyword>
<keyword id="KW-0677">Repeat</keyword>
<keyword id="KW-0723">Serine/threonine-protein kinase</keyword>
<keyword id="KW-0808">Transferase</keyword>
<keyword id="KW-0813">Transport</keyword>
<keyword id="KW-0853">WD repeat</keyword>
<gene>
    <name evidence="8" type="primary">VPS15</name>
    <name evidence="9" type="ordered locus">At4g29380</name>
    <name evidence="10" type="ORF">F17A13.200</name>
</gene>
<sequence length="1494" mass="168124">MGNKIARTTQVSATEYYLHDLPSSYNLVLKEVLGRGRFLKSIQCKHDEGLVVVKVYFKRGDSIDLREYERRLVKIKDVFLSLEHPHVWPFQFWQETDKAAYLVRQYFYSNLHDRLSTRPFLSLVEKKWLAFQLLLAVKQCHEKDICHGDIKCENVLLTSWNWLYLADFASFKPTYIPYDDPSDFSFFFDTRGQRLCYLAPERFYEHGGETQVAQDAPLKPSMDIFAVGCVIAELFLEGQPLFELAQLLAYRRGQHDPSQHLEKIPDPGIRKMILHMIQLEPEARLSAEDYLQNYVGVVFPNYFSPFLHTLYCCWNPLPSDMRVATCQGIFQEILKKMMENKSGDEIGVDSPVTSNPMNASTVQETFANHKLNSSKDLIRNTVNSKDEIFYSISDALKKNRHPFLKKITMDDLGTLMSLYDSRSDTYGTPFLPVEGNMRCEGMVLIASMLCSCIRNIKLPHLRREAILLLRSCSLYIDDDDRLQRVLPYVVALLSDPTAIVRCAAMETLCDILPLVRDFPPSDAKIFPEYIFPMLSMLPEDTEESVRICYASNIAKLALTAYGFLIHSFQLSDVGVLNELNSQQISTTPASETPSHLQKANGNAQLQQLRKTIAEVVQELVMGPKQTPNVRRALLQDIGELCFFFGQRQSNDFLLPILPAFLNDRDEQLRSVFFEKIVYVCFFVGQRSVEEYLLPYIDQALSDQTEAVIVNALECLSTLCKSSFLRKRALLQMIECVYPLLCYPSQWVRRAVVTFIAASSECLGAVDSYAFIAPVIRSYLSRLPASIASEEGLLSCLKPPVTREVVYRIFEKTRNPEFMAKQRKMWYSSSPQSKDWESVDLFDKDAGELNSVECRAEQKQSVEGKKQIKSASKQPEVQGKYAEKDAKLRIPRNPRPNASNTVELRDPVYPEKLQFSGFMAPYVSGANSFIEPENIPLYSFSMDKRAATNPPVASESSLQMNSLGMGSLSVPWMDSMSKSFNLASSVPVPKLISGSFHVGTNPKQFYRVVHEPESRENDQISSAISKFQDLGVSSSSKSASVTSEDASSPADLVGEPSLSRTSVPDSGWKPRGVLVAHLQEHRSAVNDIATSSDHSFFVSASDDSTVKVWDSRKLEKDISFRSRLTYHLEGSRGMCTTMLRNSTQVVVGASDGVIHMFSIDHISRGLGNVVEKYSGIVDIKKKDVKEGALVSLLNYTADSLSGPMVMYSTQNCGIHLWDTRSDLDAWTLKANPEEGYVSSLVTSPCGNWFVSGSSRGVLTLWDLRFRVPVNSWQYPIICPIEKMCLCFLPPSVSVSTTMKPLIYVAAGCNEVSLWNAEGGSCHQVLRVANYENETDVSEFQWKLPSNKVNPKPNHRQNMSSKYRIEELNEPPPRLPGIRSLLPLPGGDLLTGGTDLKIRRWDYSSPERSYCICGPSLKGVGNDDFYELKTNTGVQFVQETKRRPLATKLTAKAVLAAAATDTAGCHRDSVQSLASVKLNQRLLISSSRDGAIKVWK</sequence>
<protein>
    <recommendedName>
        <fullName evidence="8">Serine/threonine-protein kinase VPS15</fullName>
        <ecNumber evidence="3">2.7.11.1</ecNumber>
    </recommendedName>
    <alternativeName>
        <fullName evidence="8">Vacuolar protein sorting-associated protein 15</fullName>
        <shortName evidence="8">AtVPS15</shortName>
    </alternativeName>
</protein>
<accession>Q9M0E5</accession>
<comment type="function">
    <text evidence="1 5 6">Serine/threonine-protein kinase required for cytoplasm to vacuole transport (Cvt) and autophagy as a part of the autophagy-specific VPS34 PI3-kinase complex I (By similarity). Required for pollen development and germination, probably via the modulation of phosphatidylinositol 3-phosphate (PI3P) formation and vacuolar organization (PubMed:21833541, PubMed:22361507).</text>
</comment>
<comment type="catalytic activity">
    <reaction evidence="3">
        <text>L-seryl-[protein] + ATP = O-phospho-L-seryl-[protein] + ADP + H(+)</text>
        <dbReference type="Rhea" id="RHEA:17989"/>
        <dbReference type="Rhea" id="RHEA-COMP:9863"/>
        <dbReference type="Rhea" id="RHEA-COMP:11604"/>
        <dbReference type="ChEBI" id="CHEBI:15378"/>
        <dbReference type="ChEBI" id="CHEBI:29999"/>
        <dbReference type="ChEBI" id="CHEBI:30616"/>
        <dbReference type="ChEBI" id="CHEBI:83421"/>
        <dbReference type="ChEBI" id="CHEBI:456216"/>
        <dbReference type="EC" id="2.7.11.1"/>
    </reaction>
</comment>
<comment type="catalytic activity">
    <reaction evidence="3">
        <text>L-threonyl-[protein] + ATP = O-phospho-L-threonyl-[protein] + ADP + H(+)</text>
        <dbReference type="Rhea" id="RHEA:46608"/>
        <dbReference type="Rhea" id="RHEA-COMP:11060"/>
        <dbReference type="Rhea" id="RHEA-COMP:11605"/>
        <dbReference type="ChEBI" id="CHEBI:15378"/>
        <dbReference type="ChEBI" id="CHEBI:30013"/>
        <dbReference type="ChEBI" id="CHEBI:30616"/>
        <dbReference type="ChEBI" id="CHEBI:61977"/>
        <dbReference type="ChEBI" id="CHEBI:456216"/>
        <dbReference type="EC" id="2.7.11.1"/>
    </reaction>
</comment>
<comment type="subunit">
    <text evidence="6 7">Interacts with VPS34 (PubMed:22361507). Component of a complex made of VPS38/USL1 and PI3K main subunits such as VPS15, ATG6/VPS30 and VPS34 (PubMed:29897620).</text>
</comment>
<comment type="subcellular location">
    <subcellularLocation>
        <location evidence="5">Cytoplasm</location>
    </subcellularLocation>
    <subcellularLocation>
        <location evidence="1">Golgi apparatus</location>
        <location evidence="1">trans-Golgi network membrane</location>
        <topology evidence="1">Lipid-anchor</topology>
    </subcellularLocation>
    <subcellularLocation>
        <location evidence="6">Endosome membrane</location>
        <topology evidence="1">Lipid-anchor</topology>
    </subcellularLocation>
</comment>
<comment type="tissue specificity">
    <text evidence="5 6">Mainly expressed in anthers, pollen grains and pollen tubes, and, to a lower extent, in other tissues and organs including seedlings, roots, stems, leaves, flowers, pitils and siliques.</text>
</comment>
<comment type="developmental stage">
    <text evidence="5 6">In anthers, barely detected in microsporocytes at stage 6, but accumulates strongly in tetrads at stage 7, microspores, mature pollen grains, and tapetum cells. Also detectable in the growing pollen tubes on the stigma.</text>
</comment>
<comment type="PTM">
    <text evidence="1">Autophosphorylated.</text>
</comment>
<comment type="disruption phenotype">
    <text evidence="5 6">Reduced male gametophyte transmission. Abnormal pollen grains with unusual large vacuoles. Reduced pollen germination rescued by phosphatidylinositol 3-phosphate (PI3P) treatment.</text>
</comment>
<comment type="similarity">
    <text evidence="3">Belongs to the protein kinase superfamily. Ser/Thr protein kinase family.</text>
</comment>
<feature type="initiator methionine" description="Removed" evidence="2">
    <location>
        <position position="1"/>
    </location>
</feature>
<feature type="chain" id="PRO_0000441931" description="Serine/threonine-protein kinase VPS15">
    <location>
        <begin position="2"/>
        <end position="1494"/>
    </location>
</feature>
<feature type="domain" description="Protein kinase" evidence="3">
    <location>
        <begin position="27"/>
        <end position="307"/>
    </location>
</feature>
<feature type="repeat" description="HEAT 1" evidence="2">
    <location>
        <begin position="383"/>
        <end position="421"/>
    </location>
</feature>
<feature type="repeat" description="HEAT 2" evidence="2">
    <location>
        <begin position="480"/>
        <end position="517"/>
    </location>
</feature>
<feature type="repeat" description="HEAT 3" evidence="2">
    <location>
        <begin position="524"/>
        <end position="562"/>
    </location>
</feature>
<feature type="repeat" description="HEAT 4" evidence="2">
    <location>
        <begin position="610"/>
        <end position="646"/>
    </location>
</feature>
<feature type="repeat" description="HEAT 5" evidence="2">
    <location>
        <begin position="648"/>
        <end position="685"/>
    </location>
</feature>
<feature type="repeat" description="HEAT 6" evidence="2">
    <location>
        <begin position="687"/>
        <end position="724"/>
    </location>
</feature>
<feature type="repeat" description="HEAT 7" evidence="2">
    <location>
        <begin position="727"/>
        <end position="764"/>
    </location>
</feature>
<feature type="repeat" description="WD 1" evidence="2">
    <location>
        <begin position="1079"/>
        <end position="1118"/>
    </location>
</feature>
<feature type="repeat" description="WD 2" evidence="2">
    <location>
        <begin position="1127"/>
        <end position="1166"/>
    </location>
</feature>
<feature type="repeat" description="WD 3" evidence="2">
    <location>
        <begin position="1184"/>
        <end position="1226"/>
    </location>
</feature>
<feature type="repeat" description="WD 4" evidence="2">
    <location>
        <begin position="1231"/>
        <end position="1270"/>
    </location>
</feature>
<feature type="repeat" description="WD 5" evidence="2">
    <location>
        <begin position="1276"/>
        <end position="1323"/>
    </location>
</feature>
<feature type="repeat" description="WD 6" evidence="2">
    <location>
        <begin position="1371"/>
        <end position="1409"/>
    </location>
</feature>
<feature type="repeat" description="WD 7" evidence="2">
    <location>
        <begin position="1466"/>
        <end position="1494"/>
    </location>
</feature>
<feature type="region of interest" description="Disordered" evidence="4">
    <location>
        <begin position="859"/>
        <end position="903"/>
    </location>
</feature>
<feature type="region of interest" description="Disordered" evidence="4">
    <location>
        <begin position="1037"/>
        <end position="1064"/>
    </location>
</feature>
<feature type="compositionally biased region" description="Low complexity" evidence="4">
    <location>
        <begin position="1037"/>
        <end position="1047"/>
    </location>
</feature>
<feature type="active site" description="Proton acceptor" evidence="3">
    <location>
        <position position="149"/>
    </location>
</feature>
<feature type="binding site" evidence="3">
    <location>
        <begin position="33"/>
        <end position="41"/>
    </location>
    <ligand>
        <name>ATP</name>
        <dbReference type="ChEBI" id="CHEBI:30616"/>
    </ligand>
</feature>
<feature type="binding site" evidence="3">
    <location>
        <position position="54"/>
    </location>
    <ligand>
        <name>ATP</name>
        <dbReference type="ChEBI" id="CHEBI:30616"/>
    </ligand>
</feature>
<feature type="lipid moiety-binding region" description="N-myristoyl glycine" evidence="2">
    <location>
        <position position="2"/>
    </location>
</feature>
<organism>
    <name type="scientific">Arabidopsis thaliana</name>
    <name type="common">Mouse-ear cress</name>
    <dbReference type="NCBI Taxonomy" id="3702"/>
    <lineage>
        <taxon>Eukaryota</taxon>
        <taxon>Viridiplantae</taxon>
        <taxon>Streptophyta</taxon>
        <taxon>Embryophyta</taxon>
        <taxon>Tracheophyta</taxon>
        <taxon>Spermatophyta</taxon>
        <taxon>Magnoliopsida</taxon>
        <taxon>eudicotyledons</taxon>
        <taxon>Gunneridae</taxon>
        <taxon>Pentapetalae</taxon>
        <taxon>rosids</taxon>
        <taxon>malvids</taxon>
        <taxon>Brassicales</taxon>
        <taxon>Brassicaceae</taxon>
        <taxon>Camelineae</taxon>
        <taxon>Arabidopsis</taxon>
    </lineage>
</organism>
<proteinExistence type="evidence at protein level"/>
<dbReference type="EC" id="2.7.11.1" evidence="3"/>
<dbReference type="EMBL" id="AL161574">
    <property type="protein sequence ID" value="CAB79696.1"/>
    <property type="molecule type" value="Genomic_DNA"/>
</dbReference>
<dbReference type="EMBL" id="CP002687">
    <property type="protein sequence ID" value="AEE85624.1"/>
    <property type="molecule type" value="Genomic_DNA"/>
</dbReference>
<dbReference type="RefSeq" id="NP_194667.1">
    <property type="nucleotide sequence ID" value="NM_119083.3"/>
</dbReference>
<dbReference type="SMR" id="Q9M0E5"/>
<dbReference type="FunCoup" id="Q9M0E5">
    <property type="interactions" value="4327"/>
</dbReference>
<dbReference type="STRING" id="3702.Q9M0E5"/>
<dbReference type="iPTMnet" id="Q9M0E5"/>
<dbReference type="PaxDb" id="3702-AT4G29380.1"/>
<dbReference type="ProteomicsDB" id="242669"/>
<dbReference type="EnsemblPlants" id="AT4G29380.1">
    <property type="protein sequence ID" value="AT4G29380.1"/>
    <property type="gene ID" value="AT4G29380"/>
</dbReference>
<dbReference type="GeneID" id="829059"/>
<dbReference type="Gramene" id="AT4G29380.1">
    <property type="protein sequence ID" value="AT4G29380.1"/>
    <property type="gene ID" value="AT4G29380"/>
</dbReference>
<dbReference type="KEGG" id="ath:AT4G29380"/>
<dbReference type="Araport" id="AT4G29380"/>
<dbReference type="TAIR" id="AT4G29380">
    <property type="gene designation" value="VPS15"/>
</dbReference>
<dbReference type="eggNOG" id="KOG1240">
    <property type="taxonomic scope" value="Eukaryota"/>
</dbReference>
<dbReference type="HOGENOM" id="CLU_001696_0_1_1"/>
<dbReference type="InParanoid" id="Q9M0E5"/>
<dbReference type="OMA" id="ATNTCRI"/>
<dbReference type="PhylomeDB" id="Q9M0E5"/>
<dbReference type="PRO" id="PR:Q9M0E5"/>
<dbReference type="Proteomes" id="UP000006548">
    <property type="component" value="Chromosome 4"/>
</dbReference>
<dbReference type="ExpressionAtlas" id="Q9M0E5">
    <property type="expression patterns" value="baseline and differential"/>
</dbReference>
<dbReference type="GO" id="GO:0080008">
    <property type="term" value="C:Cul4-RING E3 ubiquitin ligase complex"/>
    <property type="evidence" value="ECO:0000250"/>
    <property type="project" value="TAIR"/>
</dbReference>
<dbReference type="GO" id="GO:0005737">
    <property type="term" value="C:cytoplasm"/>
    <property type="evidence" value="ECO:0000314"/>
    <property type="project" value="TAIR"/>
</dbReference>
<dbReference type="GO" id="GO:0010008">
    <property type="term" value="C:endosome membrane"/>
    <property type="evidence" value="ECO:0000314"/>
    <property type="project" value="UniProtKB"/>
</dbReference>
<dbReference type="GO" id="GO:0005794">
    <property type="term" value="C:Golgi apparatus"/>
    <property type="evidence" value="ECO:0007669"/>
    <property type="project" value="UniProtKB-SubCell"/>
</dbReference>
<dbReference type="GO" id="GO:0005942">
    <property type="term" value="C:phosphatidylinositol 3-kinase complex"/>
    <property type="evidence" value="ECO:0000314"/>
    <property type="project" value="UniProtKB"/>
</dbReference>
<dbReference type="GO" id="GO:0005524">
    <property type="term" value="F:ATP binding"/>
    <property type="evidence" value="ECO:0007669"/>
    <property type="project" value="UniProtKB-KW"/>
</dbReference>
<dbReference type="GO" id="GO:0106310">
    <property type="term" value="F:protein serine kinase activity"/>
    <property type="evidence" value="ECO:0007669"/>
    <property type="project" value="RHEA"/>
</dbReference>
<dbReference type="GO" id="GO:0004674">
    <property type="term" value="F:protein serine/threonine kinase activity"/>
    <property type="evidence" value="ECO:0007669"/>
    <property type="project" value="UniProtKB-KW"/>
</dbReference>
<dbReference type="GO" id="GO:0045324">
    <property type="term" value="P:late endosome to vacuole transport"/>
    <property type="evidence" value="ECO:0007669"/>
    <property type="project" value="InterPro"/>
</dbReference>
<dbReference type="GO" id="GO:0016236">
    <property type="term" value="P:macroautophagy"/>
    <property type="evidence" value="ECO:0007669"/>
    <property type="project" value="InterPro"/>
</dbReference>
<dbReference type="GO" id="GO:0009555">
    <property type="term" value="P:pollen development"/>
    <property type="evidence" value="ECO:0000315"/>
    <property type="project" value="TAIR"/>
</dbReference>
<dbReference type="GO" id="GO:0009846">
    <property type="term" value="P:pollen germination"/>
    <property type="evidence" value="ECO:0000315"/>
    <property type="project" value="UniProtKB"/>
</dbReference>
<dbReference type="GO" id="GO:0015031">
    <property type="term" value="P:protein transport"/>
    <property type="evidence" value="ECO:0007669"/>
    <property type="project" value="UniProtKB-KW"/>
</dbReference>
<dbReference type="CDD" id="cd13980">
    <property type="entry name" value="STKc_Vps15"/>
    <property type="match status" value="1"/>
</dbReference>
<dbReference type="FunFam" id="2.130.10.10:FF:001722">
    <property type="entry name" value="Phosphoinositide 3-kinase regulatory subunit 4"/>
    <property type="match status" value="1"/>
</dbReference>
<dbReference type="FunFam" id="1.10.510.10:FF:000722">
    <property type="entry name" value="Protein kinase family protein / WD-40 repeat family protein"/>
    <property type="match status" value="1"/>
</dbReference>
<dbReference type="FunFam" id="1.25.10.10:FF:000209">
    <property type="entry name" value="Protein kinase family protein / WD-40 repeat family protein"/>
    <property type="match status" value="1"/>
</dbReference>
<dbReference type="FunFam" id="1.25.10.10:FF:001459">
    <property type="entry name" value="Protein kinase family protein / WD-40 repeat family protein"/>
    <property type="match status" value="1"/>
</dbReference>
<dbReference type="Gene3D" id="1.25.10.10">
    <property type="entry name" value="Leucine-rich Repeat Variant"/>
    <property type="match status" value="2"/>
</dbReference>
<dbReference type="Gene3D" id="1.10.510.10">
    <property type="entry name" value="Transferase(Phosphotransferase) domain 1"/>
    <property type="match status" value="1"/>
</dbReference>
<dbReference type="Gene3D" id="2.130.10.10">
    <property type="entry name" value="YVTN repeat-like/Quinoprotein amine dehydrogenase"/>
    <property type="match status" value="3"/>
</dbReference>
<dbReference type="InterPro" id="IPR011989">
    <property type="entry name" value="ARM-like"/>
</dbReference>
<dbReference type="InterPro" id="IPR016024">
    <property type="entry name" value="ARM-type_fold"/>
</dbReference>
<dbReference type="InterPro" id="IPR021133">
    <property type="entry name" value="HEAT_type_2"/>
</dbReference>
<dbReference type="InterPro" id="IPR011009">
    <property type="entry name" value="Kinase-like_dom_sf"/>
</dbReference>
<dbReference type="InterPro" id="IPR000719">
    <property type="entry name" value="Prot_kinase_dom"/>
</dbReference>
<dbReference type="InterPro" id="IPR008271">
    <property type="entry name" value="Ser/Thr_kinase_AS"/>
</dbReference>
<dbReference type="InterPro" id="IPR045162">
    <property type="entry name" value="Vps15-like"/>
</dbReference>
<dbReference type="InterPro" id="IPR055231">
    <property type="entry name" value="VPS15-like_hel"/>
</dbReference>
<dbReference type="InterPro" id="IPR015943">
    <property type="entry name" value="WD40/YVTN_repeat-like_dom_sf"/>
</dbReference>
<dbReference type="InterPro" id="IPR036322">
    <property type="entry name" value="WD40_repeat_dom_sf"/>
</dbReference>
<dbReference type="InterPro" id="IPR001680">
    <property type="entry name" value="WD40_rpt"/>
</dbReference>
<dbReference type="PANTHER" id="PTHR17583">
    <property type="entry name" value="PHOSPHOINOSITIDE 3-KINASE REGULATORY SUBUNIT 4"/>
    <property type="match status" value="1"/>
</dbReference>
<dbReference type="PANTHER" id="PTHR17583:SF0">
    <property type="entry name" value="PHOSPHOINOSITIDE 3-KINASE REGULATORY SUBUNIT 4"/>
    <property type="match status" value="1"/>
</dbReference>
<dbReference type="Pfam" id="PF00069">
    <property type="entry name" value="Pkinase"/>
    <property type="match status" value="1"/>
</dbReference>
<dbReference type="Pfam" id="PF22956">
    <property type="entry name" value="VPS15-like_hel"/>
    <property type="match status" value="1"/>
</dbReference>
<dbReference type="Pfam" id="PF00400">
    <property type="entry name" value="WD40"/>
    <property type="match status" value="3"/>
</dbReference>
<dbReference type="SMART" id="SM00220">
    <property type="entry name" value="S_TKc"/>
    <property type="match status" value="1"/>
</dbReference>
<dbReference type="SMART" id="SM00320">
    <property type="entry name" value="WD40"/>
    <property type="match status" value="5"/>
</dbReference>
<dbReference type="SUPFAM" id="SSF48371">
    <property type="entry name" value="ARM repeat"/>
    <property type="match status" value="1"/>
</dbReference>
<dbReference type="SUPFAM" id="SSF56112">
    <property type="entry name" value="Protein kinase-like (PK-like)"/>
    <property type="match status" value="1"/>
</dbReference>
<dbReference type="SUPFAM" id="SSF50978">
    <property type="entry name" value="WD40 repeat-like"/>
    <property type="match status" value="1"/>
</dbReference>
<dbReference type="PROSITE" id="PS50077">
    <property type="entry name" value="HEAT_REPEAT"/>
    <property type="match status" value="2"/>
</dbReference>
<dbReference type="PROSITE" id="PS50011">
    <property type="entry name" value="PROTEIN_KINASE_DOM"/>
    <property type="match status" value="1"/>
</dbReference>
<dbReference type="PROSITE" id="PS00108">
    <property type="entry name" value="PROTEIN_KINASE_ST"/>
    <property type="match status" value="1"/>
</dbReference>
<dbReference type="PROSITE" id="PS50082">
    <property type="entry name" value="WD_REPEATS_2"/>
    <property type="match status" value="3"/>
</dbReference>
<dbReference type="PROSITE" id="PS50294">
    <property type="entry name" value="WD_REPEATS_REGION"/>
    <property type="match status" value="2"/>
</dbReference>
<name>VPS15_ARATH</name>
<evidence type="ECO:0000250" key="1">
    <source>
        <dbReference type="UniProtKB" id="P22219"/>
    </source>
</evidence>
<evidence type="ECO:0000255" key="2"/>
<evidence type="ECO:0000255" key="3">
    <source>
        <dbReference type="PROSITE-ProRule" id="PRU00159"/>
    </source>
</evidence>
<evidence type="ECO:0000256" key="4">
    <source>
        <dbReference type="SAM" id="MobiDB-lite"/>
    </source>
</evidence>
<evidence type="ECO:0000269" key="5">
    <source>
    </source>
</evidence>
<evidence type="ECO:0000269" key="6">
    <source>
    </source>
</evidence>
<evidence type="ECO:0000269" key="7">
    <source>
    </source>
</evidence>
<evidence type="ECO:0000303" key="8">
    <source>
    </source>
</evidence>
<evidence type="ECO:0000312" key="9">
    <source>
        <dbReference type="Araport" id="AT4G29380"/>
    </source>
</evidence>
<evidence type="ECO:0000312" key="10">
    <source>
        <dbReference type="EMBL" id="CAB79696.1"/>
    </source>
</evidence>
<reference key="1">
    <citation type="journal article" date="1999" name="Nature">
        <title>Sequence and analysis of chromosome 4 of the plant Arabidopsis thaliana.</title>
        <authorList>
            <person name="Mayer K.F.X."/>
            <person name="Schueller C."/>
            <person name="Wambutt R."/>
            <person name="Murphy G."/>
            <person name="Volckaert G."/>
            <person name="Pohl T."/>
            <person name="Duesterhoeft A."/>
            <person name="Stiekema W."/>
            <person name="Entian K.-D."/>
            <person name="Terryn N."/>
            <person name="Harris B."/>
            <person name="Ansorge W."/>
            <person name="Brandt P."/>
            <person name="Grivell L.A."/>
            <person name="Rieger M."/>
            <person name="Weichselgartner M."/>
            <person name="de Simone V."/>
            <person name="Obermaier B."/>
            <person name="Mache R."/>
            <person name="Mueller M."/>
            <person name="Kreis M."/>
            <person name="Delseny M."/>
            <person name="Puigdomenech P."/>
            <person name="Watson M."/>
            <person name="Schmidtheini T."/>
            <person name="Reichert B."/>
            <person name="Portetelle D."/>
            <person name="Perez-Alonso M."/>
            <person name="Boutry M."/>
            <person name="Bancroft I."/>
            <person name="Vos P."/>
            <person name="Hoheisel J."/>
            <person name="Zimmermann W."/>
            <person name="Wedler H."/>
            <person name="Ridley P."/>
            <person name="Langham S.-A."/>
            <person name="McCullagh B."/>
            <person name="Bilham L."/>
            <person name="Robben J."/>
            <person name="van der Schueren J."/>
            <person name="Grymonprez B."/>
            <person name="Chuang Y.-J."/>
            <person name="Vandenbussche F."/>
            <person name="Braeken M."/>
            <person name="Weltjens I."/>
            <person name="Voet M."/>
            <person name="Bastiaens I."/>
            <person name="Aert R."/>
            <person name="Defoor E."/>
            <person name="Weitzenegger T."/>
            <person name="Bothe G."/>
            <person name="Ramsperger U."/>
            <person name="Hilbert H."/>
            <person name="Braun M."/>
            <person name="Holzer E."/>
            <person name="Brandt A."/>
            <person name="Peters S."/>
            <person name="van Staveren M."/>
            <person name="Dirkse W."/>
            <person name="Mooijman P."/>
            <person name="Klein Lankhorst R."/>
            <person name="Rose M."/>
            <person name="Hauf J."/>
            <person name="Koetter P."/>
            <person name="Berneiser S."/>
            <person name="Hempel S."/>
            <person name="Feldpausch M."/>
            <person name="Lamberth S."/>
            <person name="Van den Daele H."/>
            <person name="De Keyser A."/>
            <person name="Buysshaert C."/>
            <person name="Gielen J."/>
            <person name="Villarroel R."/>
            <person name="De Clercq R."/>
            <person name="van Montagu M."/>
            <person name="Rogers J."/>
            <person name="Cronin A."/>
            <person name="Quail M.A."/>
            <person name="Bray-Allen S."/>
            <person name="Clark L."/>
            <person name="Doggett J."/>
            <person name="Hall S."/>
            <person name="Kay M."/>
            <person name="Lennard N."/>
            <person name="McLay K."/>
            <person name="Mayes R."/>
            <person name="Pettett A."/>
            <person name="Rajandream M.A."/>
            <person name="Lyne M."/>
            <person name="Benes V."/>
            <person name="Rechmann S."/>
            <person name="Borkova D."/>
            <person name="Bloecker H."/>
            <person name="Scharfe M."/>
            <person name="Grimm M."/>
            <person name="Loehnert T.-H."/>
            <person name="Dose S."/>
            <person name="de Haan M."/>
            <person name="Maarse A.C."/>
            <person name="Schaefer M."/>
            <person name="Mueller-Auer S."/>
            <person name="Gabel C."/>
            <person name="Fuchs M."/>
            <person name="Fartmann B."/>
            <person name="Granderath K."/>
            <person name="Dauner D."/>
            <person name="Herzl A."/>
            <person name="Neumann S."/>
            <person name="Argiriou A."/>
            <person name="Vitale D."/>
            <person name="Liguori R."/>
            <person name="Piravandi E."/>
            <person name="Massenet O."/>
            <person name="Quigley F."/>
            <person name="Clabauld G."/>
            <person name="Muendlein A."/>
            <person name="Felber R."/>
            <person name="Schnabl S."/>
            <person name="Hiller R."/>
            <person name="Schmidt W."/>
            <person name="Lecharny A."/>
            <person name="Aubourg S."/>
            <person name="Chefdor F."/>
            <person name="Cooke R."/>
            <person name="Berger C."/>
            <person name="Monfort A."/>
            <person name="Casacuberta E."/>
            <person name="Gibbons T."/>
            <person name="Weber N."/>
            <person name="Vandenbol M."/>
            <person name="Bargues M."/>
            <person name="Terol J."/>
            <person name="Torres A."/>
            <person name="Perez-Perez A."/>
            <person name="Purnelle B."/>
            <person name="Bent E."/>
            <person name="Johnson S."/>
            <person name="Tacon D."/>
            <person name="Jesse T."/>
            <person name="Heijnen L."/>
            <person name="Schwarz S."/>
            <person name="Scholler P."/>
            <person name="Heber S."/>
            <person name="Francs P."/>
            <person name="Bielke C."/>
            <person name="Frishman D."/>
            <person name="Haase D."/>
            <person name="Lemcke K."/>
            <person name="Mewes H.-W."/>
            <person name="Stocker S."/>
            <person name="Zaccaria P."/>
            <person name="Bevan M."/>
            <person name="Wilson R.K."/>
            <person name="de la Bastide M."/>
            <person name="Habermann K."/>
            <person name="Parnell L."/>
            <person name="Dedhia N."/>
            <person name="Gnoj L."/>
            <person name="Schutz K."/>
            <person name="Huang E."/>
            <person name="Spiegel L."/>
            <person name="Sekhon M."/>
            <person name="Murray J."/>
            <person name="Sheet P."/>
            <person name="Cordes M."/>
            <person name="Abu-Threideh J."/>
            <person name="Stoneking T."/>
            <person name="Kalicki J."/>
            <person name="Graves T."/>
            <person name="Harmon G."/>
            <person name="Edwards J."/>
            <person name="Latreille P."/>
            <person name="Courtney L."/>
            <person name="Cloud J."/>
            <person name="Abbott A."/>
            <person name="Scott K."/>
            <person name="Johnson D."/>
            <person name="Minx P."/>
            <person name="Bentley D."/>
            <person name="Fulton B."/>
            <person name="Miller N."/>
            <person name="Greco T."/>
            <person name="Kemp K."/>
            <person name="Kramer J."/>
            <person name="Fulton L."/>
            <person name="Mardis E."/>
            <person name="Dante M."/>
            <person name="Pepin K."/>
            <person name="Hillier L.W."/>
            <person name="Nelson J."/>
            <person name="Spieth J."/>
            <person name="Ryan E."/>
            <person name="Andrews S."/>
            <person name="Geisel C."/>
            <person name="Layman D."/>
            <person name="Du H."/>
            <person name="Ali J."/>
            <person name="Berghoff A."/>
            <person name="Jones K."/>
            <person name="Drone K."/>
            <person name="Cotton M."/>
            <person name="Joshu C."/>
            <person name="Antonoiu B."/>
            <person name="Zidanic M."/>
            <person name="Strong C."/>
            <person name="Sun H."/>
            <person name="Lamar B."/>
            <person name="Yordan C."/>
            <person name="Ma P."/>
            <person name="Zhong J."/>
            <person name="Preston R."/>
            <person name="Vil D."/>
            <person name="Shekher M."/>
            <person name="Matero A."/>
            <person name="Shah R."/>
            <person name="Swaby I.K."/>
            <person name="O'Shaughnessy A."/>
            <person name="Rodriguez M."/>
            <person name="Hoffman J."/>
            <person name="Till S."/>
            <person name="Granat S."/>
            <person name="Shohdy N."/>
            <person name="Hasegawa A."/>
            <person name="Hameed A."/>
            <person name="Lodhi M."/>
            <person name="Johnson A."/>
            <person name="Chen E."/>
            <person name="Marra M.A."/>
            <person name="Martienssen R."/>
            <person name="McCombie W.R."/>
        </authorList>
    </citation>
    <scope>NUCLEOTIDE SEQUENCE [LARGE SCALE GENOMIC DNA]</scope>
    <source>
        <strain>cv. Columbia</strain>
    </source>
</reference>
<reference key="2">
    <citation type="journal article" date="2017" name="Plant J.">
        <title>Araport11: a complete reannotation of the Arabidopsis thaliana reference genome.</title>
        <authorList>
            <person name="Cheng C.Y."/>
            <person name="Krishnakumar V."/>
            <person name="Chan A.P."/>
            <person name="Thibaud-Nissen F."/>
            <person name="Schobel S."/>
            <person name="Town C.D."/>
        </authorList>
    </citation>
    <scope>GENOME REANNOTATION</scope>
    <source>
        <strain>cv. Columbia</strain>
    </source>
</reference>
<reference key="3">
    <citation type="journal article" date="2011" name="Plant Mol. Biol.">
        <title>Arabidopsis AtVPS15 is essential for pollen development and germination through modulating phosphatidylinositol 3-phosphate formation.</title>
        <authorList>
            <person name="Xu N."/>
            <person name="Gao X.-Q."/>
            <person name="Zhao X.Y."/>
            <person name="Zhu D.Z."/>
            <person name="Zhou L.Z."/>
            <person name="Zhang X.S."/>
        </authorList>
    </citation>
    <scope>FUNCTION</scope>
    <scope>DISRUPTION PHENOTYPE</scope>
    <scope>TISSUE SPECIFICITY</scope>
    <scope>SUBCELLULAR LOCATION</scope>
    <scope>DEVELOPMENTAL STAGE</scope>
    <source>
        <strain>cv. Columbia</strain>
    </source>
</reference>
<reference key="4">
    <citation type="journal article" date="2012" name="J. Genet. Genomics">
        <title>Arabidopsis AtVPS15 plays essential roles in pollen germination possibly by interacting with AtVPS34.</title>
        <authorList>
            <person name="Wang W.-Y."/>
            <person name="Zhang L."/>
            <person name="Xing S."/>
            <person name="Ma Z."/>
            <person name="Liu J."/>
            <person name="Gu H."/>
            <person name="Qin G."/>
            <person name="Qu L.-J."/>
        </authorList>
    </citation>
    <scope>FUNCTION</scope>
    <scope>DISRUPTION PHENOTYPE</scope>
    <scope>TISSUE SPECIFICITY</scope>
    <scope>INTERACTION WITH VPS34</scope>
    <scope>DEVELOPMENTAL STAGE</scope>
    <scope>SUBCELLULAR LOCATION</scope>
    <source>
        <strain>cv. Columbia</strain>
    </source>
</reference>
<reference key="5">
    <citation type="journal article" date="2018" name="New Phytol.">
        <title>The Arabidopsis USL1 controls multiple aspects of development by affecting late endosome morphology.</title>
        <authorList>
            <person name="Yuan R."/>
            <person name="Lan J."/>
            <person name="Fang Y."/>
            <person name="Yu H."/>
            <person name="Zhang J."/>
            <person name="Huang J."/>
            <person name="Qin G."/>
        </authorList>
    </citation>
    <scope>SUBUNIT</scope>
    <source>
        <strain>cv. Columbia</strain>
    </source>
</reference>